<gene>
    <name type="ordered locus">CT_584</name>
</gene>
<reference key="1">
    <citation type="journal article" date="1998" name="Science">
        <title>Genome sequence of an obligate intracellular pathogen of humans: Chlamydia trachomatis.</title>
        <authorList>
            <person name="Stephens R.S."/>
            <person name="Kalman S."/>
            <person name="Lammel C.J."/>
            <person name="Fan J."/>
            <person name="Marathe R."/>
            <person name="Aravind L."/>
            <person name="Mitchell W.P."/>
            <person name="Olinger L."/>
            <person name="Tatusov R.L."/>
            <person name="Zhao Q."/>
            <person name="Koonin E.V."/>
            <person name="Davis R.W."/>
        </authorList>
    </citation>
    <scope>NUCLEOTIDE SEQUENCE [LARGE SCALE GENOMIC DNA]</scope>
    <source>
        <strain>ATCC VR-885 / DSM 19411 / UW-3/Cx</strain>
    </source>
</reference>
<proteinExistence type="inferred from homology"/>
<evidence type="ECO:0000305" key="1"/>
<accession>O84588</accession>
<keyword id="KW-1185">Reference proteome</keyword>
<protein>
    <recommendedName>
        <fullName>Protein CT_584</fullName>
    </recommendedName>
</protein>
<feature type="chain" id="PRO_0000218429" description="Protein CT_584">
    <location>
        <begin position="1"/>
        <end position="183"/>
    </location>
</feature>
<organism>
    <name type="scientific">Chlamydia trachomatis serovar D (strain ATCC VR-885 / DSM 19411 / UW-3/Cx)</name>
    <dbReference type="NCBI Taxonomy" id="272561"/>
    <lineage>
        <taxon>Bacteria</taxon>
        <taxon>Pseudomonadati</taxon>
        <taxon>Chlamydiota</taxon>
        <taxon>Chlamydiia</taxon>
        <taxon>Chlamydiales</taxon>
        <taxon>Chlamydiaceae</taxon>
        <taxon>Chlamydia/Chlamydophila group</taxon>
        <taxon>Chlamydia</taxon>
    </lineage>
</organism>
<name>Y584_CHLTR</name>
<dbReference type="EMBL" id="AE001273">
    <property type="protein sequence ID" value="AAC68186.1"/>
    <property type="molecule type" value="Genomic_DNA"/>
</dbReference>
<dbReference type="PIR" id="A71496">
    <property type="entry name" value="A71496"/>
</dbReference>
<dbReference type="RefSeq" id="NP_220099.1">
    <property type="nucleotide sequence ID" value="NC_000117.1"/>
</dbReference>
<dbReference type="RefSeq" id="WP_009871950.1">
    <property type="nucleotide sequence ID" value="NC_000117.1"/>
</dbReference>
<dbReference type="SMR" id="O84588"/>
<dbReference type="STRING" id="272561.CT_584"/>
<dbReference type="EnsemblBacteria" id="AAC68186">
    <property type="protein sequence ID" value="AAC68186"/>
    <property type="gene ID" value="CT_584"/>
</dbReference>
<dbReference type="GeneID" id="884367"/>
<dbReference type="KEGG" id="ctr:CT_584"/>
<dbReference type="PATRIC" id="fig|272561.5.peg.636"/>
<dbReference type="HOGENOM" id="CLU_1472715_0_0_0"/>
<dbReference type="InParanoid" id="O84588"/>
<dbReference type="OrthoDB" id="18350at2"/>
<dbReference type="Proteomes" id="UP000000431">
    <property type="component" value="Chromosome"/>
</dbReference>
<dbReference type="Gene3D" id="1.20.58.1050">
    <property type="match status" value="1"/>
</dbReference>
<dbReference type="Gene3D" id="6.10.250.1130">
    <property type="match status" value="1"/>
</dbReference>
<dbReference type="InterPro" id="IPR035397">
    <property type="entry name" value="CT_584-like"/>
</dbReference>
<dbReference type="Pfam" id="PF17435">
    <property type="entry name" value="CT_584-like"/>
    <property type="match status" value="1"/>
</dbReference>
<comment type="similarity">
    <text evidence="1">Belongs to the chlamydial CPn_0803/CT_584/TC_0873 family.</text>
</comment>
<sequence length="183" mass="21142">MTTKPKTLEIDNNTFLLLEGNLKRIFATPIGYTTFREFQNVVFNCAQGQQELANFLFEMLINGKLLQELPAGQKQSAQSLIVQFMMPIRVAKDIHERGEFINFITSDMLAQQERCVFLNRLSRVDGQEFLLMTDVQNTCHLIRHLLSRLLEAQKNPIGEKNLQEIQEDLDSLRAHFEELTKSV</sequence>